<comment type="function">
    <text evidence="1">Beta-glucosidases are one of a number of cellulolytic enzymes involved in the degradation of cellulosic biomass. Catalyzes the last step releasing glucose from the inhibitory cellobiose (By similarity).</text>
</comment>
<comment type="catalytic activity">
    <reaction>
        <text>Hydrolysis of terminal, non-reducing beta-D-glucosyl residues with release of beta-D-glucose.</text>
        <dbReference type="EC" id="3.2.1.21"/>
    </reaction>
</comment>
<comment type="pathway">
    <text>Glycan metabolism; cellulose degradation.</text>
</comment>
<comment type="subcellular location">
    <subcellularLocation>
        <location evidence="1">Cell membrane</location>
        <topology evidence="1">Single-pass type II membrane protein</topology>
    </subcellularLocation>
</comment>
<comment type="similarity">
    <text evidence="4">Belongs to the glycosyl hydrolase 3 family.</text>
</comment>
<keyword id="KW-0119">Carbohydrate metabolism</keyword>
<keyword id="KW-1003">Cell membrane</keyword>
<keyword id="KW-0136">Cellulose degradation</keyword>
<keyword id="KW-0325">Glycoprotein</keyword>
<keyword id="KW-0326">Glycosidase</keyword>
<keyword id="KW-0378">Hydrolase</keyword>
<keyword id="KW-0472">Membrane</keyword>
<keyword id="KW-0624">Polysaccharide degradation</keyword>
<keyword id="KW-1185">Reference proteome</keyword>
<keyword id="KW-0735">Signal-anchor</keyword>
<keyword id="KW-0812">Transmembrane</keyword>
<keyword id="KW-1133">Transmembrane helix</keyword>
<dbReference type="EC" id="3.2.1.21"/>
<dbReference type="EMBL" id="AACD01000110">
    <property type="protein sequence ID" value="EAA58181.1"/>
    <property type="molecule type" value="Genomic_DNA"/>
</dbReference>
<dbReference type="EMBL" id="BN001301">
    <property type="protein sequence ID" value="CBF71178.1"/>
    <property type="molecule type" value="Genomic_DNA"/>
</dbReference>
<dbReference type="RefSeq" id="XP_664256.1">
    <property type="nucleotide sequence ID" value="XM_659164.1"/>
</dbReference>
<dbReference type="SMR" id="Q5AYH8"/>
<dbReference type="STRING" id="227321.Q5AYH8"/>
<dbReference type="CAZy" id="GH3">
    <property type="family name" value="Glycoside Hydrolase Family 3"/>
</dbReference>
<dbReference type="GlyCosmos" id="Q5AYH8">
    <property type="glycosylation" value="7 sites, No reported glycans"/>
</dbReference>
<dbReference type="EnsemblFungi" id="CBF71178">
    <property type="protein sequence ID" value="CBF71178"/>
    <property type="gene ID" value="ANIA_06652"/>
</dbReference>
<dbReference type="KEGG" id="ani:ANIA_06652"/>
<dbReference type="VEuPathDB" id="FungiDB:AN6652"/>
<dbReference type="eggNOG" id="ENOG502QR4D">
    <property type="taxonomic scope" value="Eukaryota"/>
</dbReference>
<dbReference type="HOGENOM" id="CLU_004542_2_0_1"/>
<dbReference type="InParanoid" id="Q5AYH8"/>
<dbReference type="OMA" id="VVMESWI"/>
<dbReference type="OrthoDB" id="416222at2759"/>
<dbReference type="UniPathway" id="UPA00696"/>
<dbReference type="Proteomes" id="UP000000560">
    <property type="component" value="Chromosome I"/>
</dbReference>
<dbReference type="GO" id="GO:0005886">
    <property type="term" value="C:plasma membrane"/>
    <property type="evidence" value="ECO:0007669"/>
    <property type="project" value="UniProtKB-SubCell"/>
</dbReference>
<dbReference type="GO" id="GO:0008422">
    <property type="term" value="F:beta-glucosidase activity"/>
    <property type="evidence" value="ECO:0000318"/>
    <property type="project" value="GO_Central"/>
</dbReference>
<dbReference type="GO" id="GO:0030245">
    <property type="term" value="P:cellulose catabolic process"/>
    <property type="evidence" value="ECO:0007669"/>
    <property type="project" value="UniProtKB-UniPathway"/>
</dbReference>
<dbReference type="GO" id="GO:0009251">
    <property type="term" value="P:glucan catabolic process"/>
    <property type="evidence" value="ECO:0000318"/>
    <property type="project" value="GO_Central"/>
</dbReference>
<dbReference type="FunFam" id="3.20.20.300:FF:000002">
    <property type="entry name" value="Probable beta-glucosidase"/>
    <property type="match status" value="1"/>
</dbReference>
<dbReference type="FunFam" id="3.40.50.1700:FF:000003">
    <property type="entry name" value="Probable beta-glucosidase"/>
    <property type="match status" value="1"/>
</dbReference>
<dbReference type="FunFam" id="2.60.40.10:FF:002666">
    <property type="entry name" value="Probable beta-glucosidase E"/>
    <property type="match status" value="1"/>
</dbReference>
<dbReference type="Gene3D" id="3.40.50.1700">
    <property type="entry name" value="Glycoside hydrolase family 3 C-terminal domain"/>
    <property type="match status" value="1"/>
</dbReference>
<dbReference type="Gene3D" id="3.20.20.300">
    <property type="entry name" value="Glycoside hydrolase, family 3, N-terminal domain"/>
    <property type="match status" value="1"/>
</dbReference>
<dbReference type="Gene3D" id="2.60.40.10">
    <property type="entry name" value="Immunoglobulins"/>
    <property type="match status" value="1"/>
</dbReference>
<dbReference type="InterPro" id="IPR050288">
    <property type="entry name" value="Cellulose_deg_GH3"/>
</dbReference>
<dbReference type="InterPro" id="IPR026891">
    <property type="entry name" value="Fn3-like"/>
</dbReference>
<dbReference type="InterPro" id="IPR002772">
    <property type="entry name" value="Glyco_hydro_3_C"/>
</dbReference>
<dbReference type="InterPro" id="IPR036881">
    <property type="entry name" value="Glyco_hydro_3_C_sf"/>
</dbReference>
<dbReference type="InterPro" id="IPR001764">
    <property type="entry name" value="Glyco_hydro_3_N"/>
</dbReference>
<dbReference type="InterPro" id="IPR036962">
    <property type="entry name" value="Glyco_hydro_3_N_sf"/>
</dbReference>
<dbReference type="InterPro" id="IPR017853">
    <property type="entry name" value="Glycoside_hydrolase_SF"/>
</dbReference>
<dbReference type="InterPro" id="IPR013783">
    <property type="entry name" value="Ig-like_fold"/>
</dbReference>
<dbReference type="PANTHER" id="PTHR42715">
    <property type="entry name" value="BETA-GLUCOSIDASE"/>
    <property type="match status" value="1"/>
</dbReference>
<dbReference type="PANTHER" id="PTHR42715:SF20">
    <property type="entry name" value="BETA-GLUCOSIDASE E-RELATED"/>
    <property type="match status" value="1"/>
</dbReference>
<dbReference type="Pfam" id="PF14310">
    <property type="entry name" value="Fn3-like"/>
    <property type="match status" value="1"/>
</dbReference>
<dbReference type="Pfam" id="PF00933">
    <property type="entry name" value="Glyco_hydro_3"/>
    <property type="match status" value="1"/>
</dbReference>
<dbReference type="Pfam" id="PF01915">
    <property type="entry name" value="Glyco_hydro_3_C"/>
    <property type="match status" value="1"/>
</dbReference>
<dbReference type="PRINTS" id="PR00133">
    <property type="entry name" value="GLHYDRLASE3"/>
</dbReference>
<dbReference type="SMART" id="SM01217">
    <property type="entry name" value="Fn3_like"/>
    <property type="match status" value="1"/>
</dbReference>
<dbReference type="SUPFAM" id="SSF51445">
    <property type="entry name" value="(Trans)glycosidases"/>
    <property type="match status" value="1"/>
</dbReference>
<dbReference type="SUPFAM" id="SSF52279">
    <property type="entry name" value="Beta-D-glucan exohydrolase, C-terminal domain"/>
    <property type="match status" value="1"/>
</dbReference>
<gene>
    <name type="primary">bglE</name>
    <name type="ORF">AN6652</name>
</gene>
<feature type="chain" id="PRO_0000394874" description="Probable beta-glucosidase E">
    <location>
        <begin position="1"/>
        <end position="1023"/>
    </location>
</feature>
<feature type="topological domain" description="Cytoplasmic" evidence="2">
    <location>
        <begin position="1"/>
        <end position="128"/>
    </location>
</feature>
<feature type="transmembrane region" description="Helical; Signal-anchor for type II membrane protein" evidence="2">
    <location>
        <begin position="129"/>
        <end position="149"/>
    </location>
</feature>
<feature type="topological domain" description="Extracellular" evidence="2">
    <location>
        <begin position="150"/>
        <end position="1023"/>
    </location>
</feature>
<feature type="region of interest" description="Disordered" evidence="3">
    <location>
        <begin position="1"/>
        <end position="51"/>
    </location>
</feature>
<feature type="region of interest" description="Disordered" evidence="3">
    <location>
        <begin position="485"/>
        <end position="515"/>
    </location>
</feature>
<feature type="region of interest" description="Disordered" evidence="3">
    <location>
        <begin position="822"/>
        <end position="841"/>
    </location>
</feature>
<feature type="region of interest" description="Disordered" evidence="3">
    <location>
        <begin position="873"/>
        <end position="909"/>
    </location>
</feature>
<feature type="compositionally biased region" description="Basic and acidic residues" evidence="3">
    <location>
        <begin position="11"/>
        <end position="45"/>
    </location>
</feature>
<feature type="compositionally biased region" description="Low complexity" evidence="3">
    <location>
        <begin position="827"/>
        <end position="838"/>
    </location>
</feature>
<feature type="active site" evidence="1">
    <location>
        <position position="415"/>
    </location>
</feature>
<feature type="glycosylation site" description="N-linked (GlcNAc...) asparagine" evidence="2">
    <location>
        <position position="199"/>
    </location>
</feature>
<feature type="glycosylation site" description="N-linked (GlcNAc...) asparagine" evidence="2">
    <location>
        <position position="387"/>
    </location>
</feature>
<feature type="glycosylation site" description="N-linked (GlcNAc...) asparagine" evidence="2">
    <location>
        <position position="458"/>
    </location>
</feature>
<feature type="glycosylation site" description="N-linked (GlcNAc...) asparagine" evidence="2">
    <location>
        <position position="497"/>
    </location>
</feature>
<feature type="glycosylation site" description="N-linked (GlcNAc...) asparagine" evidence="2">
    <location>
        <position position="848"/>
    </location>
</feature>
<feature type="glycosylation site" description="N-linked (GlcNAc...) asparagine" evidence="2">
    <location>
        <position position="964"/>
    </location>
</feature>
<feature type="glycosylation site" description="N-linked (GlcNAc...) asparagine" evidence="2">
    <location>
        <position position="979"/>
    </location>
</feature>
<sequence>MPKSYTPVHDSIPEEDHFSSDDESNFRLHRIDRSASRSQSPKENEGEPSILAPLVRKSTDFETYLDSLTEDEQQLLSASKDHDIEDLDRFGDGTAAARRRFSESKKRRKLLAKRGGWRAVYYSKTWWRTLVVVIIALGLLVWGFLKYASTRGDIWEEYDMPGPDSYFPTPKGGTLKHWAESYEKASKLVERMTLIEKVNITTGTGWQMGINSKLTISGPAALVGFPSLCLQDGPLGIRFADHITAFPAGITTGATWNRDLMRQRGAAIGLEARLKGVNVILGPSMGPLGMMPAGGRNWEGFGSDPVLQAVAAVETIHGIQSNGVMATAKHYIMNEQEHFRQPNEWGIPYALSSNIDDRALHEVFLWPFAESIRADVASVMCSYNQVNNSHACENSKLLNGILKDELGFQGFVQSDWLAQRSGVNSALGGLDMSMPGDGLHWADGRSLWGSELTRAALNTSVPMERLNDMVTRIVAAWYQLGQDSWESPAPDGDGGPNFSSWTDDEFGFRYPGSPGDTSAARVNRFIDAQGRGEEGHWNIARKVAAEGIVLVKNVGGVLPLSRSPRANAERPYRVGVYGDDGGPAAGPNICTDRGCNSGTLAMGWGSGTVEFPYLISPIDALQGAWQSDVQMTPYLRNAVMPADTSDKDLCLVFVNADSGEGYISAGGIHGDRNNLFLQKGGDTLVHTVATNCGGPTVVVVHAVGPVIVEPWIDLPGVQAVLFAHLPGEESGNALLDVLFGDVDASGRLPYTVGKSLEDYGPGAQVLYEPNAPVPQVDFSDALYIDHRYFDRNNINPRYEFGFGLSYTKWELTNMKITRLQRNPSRLPAARPPDAVAPPSYDANPPLANESVLFPPGFRILSKYIYPYLPTLEATTPPPPNPEASGSATDQKPHRTKPSDAGGGAGGNPSLYEEVARIDLTVQNTGTRSGQQVIQLYVSFPHTVTESSGQKSHENIDFPDRVLRNFTKISLAPGQKMDVNMTLTRKDLSYWSVREQNWVLPKDEFYFWVGYSSRNLPLGKPFDP</sequence>
<organism>
    <name type="scientific">Emericella nidulans (strain FGSC A4 / ATCC 38163 / CBS 112.46 / NRRL 194 / M139)</name>
    <name type="common">Aspergillus nidulans</name>
    <dbReference type="NCBI Taxonomy" id="227321"/>
    <lineage>
        <taxon>Eukaryota</taxon>
        <taxon>Fungi</taxon>
        <taxon>Dikarya</taxon>
        <taxon>Ascomycota</taxon>
        <taxon>Pezizomycotina</taxon>
        <taxon>Eurotiomycetes</taxon>
        <taxon>Eurotiomycetidae</taxon>
        <taxon>Eurotiales</taxon>
        <taxon>Aspergillaceae</taxon>
        <taxon>Aspergillus</taxon>
        <taxon>Aspergillus subgen. Nidulantes</taxon>
    </lineage>
</organism>
<evidence type="ECO:0000250" key="1"/>
<evidence type="ECO:0000255" key="2"/>
<evidence type="ECO:0000256" key="3">
    <source>
        <dbReference type="SAM" id="MobiDB-lite"/>
    </source>
</evidence>
<evidence type="ECO:0000305" key="4"/>
<proteinExistence type="inferred from homology"/>
<accession>Q5AYH8</accession>
<accession>C8V1D9</accession>
<protein>
    <recommendedName>
        <fullName>Probable beta-glucosidase E</fullName>
        <ecNumber>3.2.1.21</ecNumber>
    </recommendedName>
    <alternativeName>
        <fullName>Beta-D-glucoside glucohydrolase E</fullName>
    </alternativeName>
    <alternativeName>
        <fullName>Cellobiase E</fullName>
    </alternativeName>
    <alternativeName>
        <fullName>Gentiobiase E</fullName>
    </alternativeName>
</protein>
<reference key="1">
    <citation type="journal article" date="2005" name="Nature">
        <title>Sequencing of Aspergillus nidulans and comparative analysis with A. fumigatus and A. oryzae.</title>
        <authorList>
            <person name="Galagan J.E."/>
            <person name="Calvo S.E."/>
            <person name="Cuomo C."/>
            <person name="Ma L.-J."/>
            <person name="Wortman J.R."/>
            <person name="Batzoglou S."/>
            <person name="Lee S.-I."/>
            <person name="Bastuerkmen M."/>
            <person name="Spevak C.C."/>
            <person name="Clutterbuck J."/>
            <person name="Kapitonov V."/>
            <person name="Jurka J."/>
            <person name="Scazzocchio C."/>
            <person name="Farman M.L."/>
            <person name="Butler J."/>
            <person name="Purcell S."/>
            <person name="Harris S."/>
            <person name="Braus G.H."/>
            <person name="Draht O."/>
            <person name="Busch S."/>
            <person name="D'Enfert C."/>
            <person name="Bouchier C."/>
            <person name="Goldman G.H."/>
            <person name="Bell-Pedersen D."/>
            <person name="Griffiths-Jones S."/>
            <person name="Doonan J.H."/>
            <person name="Yu J."/>
            <person name="Vienken K."/>
            <person name="Pain A."/>
            <person name="Freitag M."/>
            <person name="Selker E.U."/>
            <person name="Archer D.B."/>
            <person name="Penalva M.A."/>
            <person name="Oakley B.R."/>
            <person name="Momany M."/>
            <person name="Tanaka T."/>
            <person name="Kumagai T."/>
            <person name="Asai K."/>
            <person name="Machida M."/>
            <person name="Nierman W.C."/>
            <person name="Denning D.W."/>
            <person name="Caddick M.X."/>
            <person name="Hynes M."/>
            <person name="Paoletti M."/>
            <person name="Fischer R."/>
            <person name="Miller B.L."/>
            <person name="Dyer P.S."/>
            <person name="Sachs M.S."/>
            <person name="Osmani S.A."/>
            <person name="Birren B.W."/>
        </authorList>
    </citation>
    <scope>NUCLEOTIDE SEQUENCE [LARGE SCALE GENOMIC DNA]</scope>
    <source>
        <strain>FGSC A4 / ATCC 38163 / CBS 112.46 / NRRL 194 / M139</strain>
    </source>
</reference>
<reference key="2">
    <citation type="journal article" date="2009" name="Fungal Genet. Biol.">
        <title>The 2008 update of the Aspergillus nidulans genome annotation: a community effort.</title>
        <authorList>
            <person name="Wortman J.R."/>
            <person name="Gilsenan J.M."/>
            <person name="Joardar V."/>
            <person name="Deegan J."/>
            <person name="Clutterbuck J."/>
            <person name="Andersen M.R."/>
            <person name="Archer D."/>
            <person name="Bencina M."/>
            <person name="Braus G."/>
            <person name="Coutinho P."/>
            <person name="von Dohren H."/>
            <person name="Doonan J."/>
            <person name="Driessen A.J."/>
            <person name="Durek P."/>
            <person name="Espeso E."/>
            <person name="Fekete E."/>
            <person name="Flipphi M."/>
            <person name="Estrada C.G."/>
            <person name="Geysens S."/>
            <person name="Goldman G."/>
            <person name="de Groot P.W."/>
            <person name="Hansen K."/>
            <person name="Harris S.D."/>
            <person name="Heinekamp T."/>
            <person name="Helmstaedt K."/>
            <person name="Henrissat B."/>
            <person name="Hofmann G."/>
            <person name="Homan T."/>
            <person name="Horio T."/>
            <person name="Horiuchi H."/>
            <person name="James S."/>
            <person name="Jones M."/>
            <person name="Karaffa L."/>
            <person name="Karanyi Z."/>
            <person name="Kato M."/>
            <person name="Keller N."/>
            <person name="Kelly D.E."/>
            <person name="Kiel J.A."/>
            <person name="Kim J.M."/>
            <person name="van der Klei I.J."/>
            <person name="Klis F.M."/>
            <person name="Kovalchuk A."/>
            <person name="Krasevec N."/>
            <person name="Kubicek C.P."/>
            <person name="Liu B."/>
            <person name="Maccabe A."/>
            <person name="Meyer V."/>
            <person name="Mirabito P."/>
            <person name="Miskei M."/>
            <person name="Mos M."/>
            <person name="Mullins J."/>
            <person name="Nelson D.R."/>
            <person name="Nielsen J."/>
            <person name="Oakley B.R."/>
            <person name="Osmani S.A."/>
            <person name="Pakula T."/>
            <person name="Paszewski A."/>
            <person name="Paulsen I."/>
            <person name="Pilsyk S."/>
            <person name="Pocsi I."/>
            <person name="Punt P.J."/>
            <person name="Ram A.F."/>
            <person name="Ren Q."/>
            <person name="Robellet X."/>
            <person name="Robson G."/>
            <person name="Seiboth B."/>
            <person name="van Solingen P."/>
            <person name="Specht T."/>
            <person name="Sun J."/>
            <person name="Taheri-Talesh N."/>
            <person name="Takeshita N."/>
            <person name="Ussery D."/>
            <person name="vanKuyk P.A."/>
            <person name="Visser H."/>
            <person name="van de Vondervoort P.J."/>
            <person name="de Vries R.P."/>
            <person name="Walton J."/>
            <person name="Xiang X."/>
            <person name="Xiong Y."/>
            <person name="Zeng A.P."/>
            <person name="Brandt B.W."/>
            <person name="Cornell M.J."/>
            <person name="van den Hondel C.A."/>
            <person name="Visser J."/>
            <person name="Oliver S.G."/>
            <person name="Turner G."/>
        </authorList>
    </citation>
    <scope>GENOME REANNOTATION</scope>
    <source>
        <strain>FGSC A4 / ATCC 38163 / CBS 112.46 / NRRL 194 / M139</strain>
    </source>
</reference>
<name>BGLE_EMENI</name>